<feature type="chain" id="PRO_1000053585" description="Protein GrpE">
    <location>
        <begin position="1"/>
        <end position="195"/>
    </location>
</feature>
<comment type="function">
    <text evidence="1">Participates actively in the response to hyperosmotic and heat shock by preventing the aggregation of stress-denatured proteins, in association with DnaK and GrpE. It is the nucleotide exchange factor for DnaK and may function as a thermosensor. Unfolded proteins bind initially to DnaJ; upon interaction with the DnaJ-bound protein, DnaK hydrolyzes its bound ATP, resulting in the formation of a stable complex. GrpE releases ADP from DnaK; ATP binding to DnaK triggers the release of the substrate protein, thus completing the reaction cycle. Several rounds of ATP-dependent interactions between DnaJ, DnaK and GrpE are required for fully efficient folding.</text>
</comment>
<comment type="subunit">
    <text evidence="1">Homodimer.</text>
</comment>
<comment type="subcellular location">
    <subcellularLocation>
        <location evidence="1">Cytoplasm</location>
    </subcellularLocation>
</comment>
<comment type="similarity">
    <text evidence="1">Belongs to the GrpE family.</text>
</comment>
<proteinExistence type="inferred from homology"/>
<organism>
    <name type="scientific">Francisella tularensis subsp. tularensis (strain WY96-3418)</name>
    <dbReference type="NCBI Taxonomy" id="418136"/>
    <lineage>
        <taxon>Bacteria</taxon>
        <taxon>Pseudomonadati</taxon>
        <taxon>Pseudomonadota</taxon>
        <taxon>Gammaproteobacteria</taxon>
        <taxon>Thiotrichales</taxon>
        <taxon>Francisellaceae</taxon>
        <taxon>Francisella</taxon>
    </lineage>
</organism>
<protein>
    <recommendedName>
        <fullName evidence="1">Protein GrpE</fullName>
    </recommendedName>
    <alternativeName>
        <fullName evidence="1">HSP-70 cofactor</fullName>
    </alternativeName>
</protein>
<keyword id="KW-0143">Chaperone</keyword>
<keyword id="KW-0963">Cytoplasm</keyword>
<keyword id="KW-0346">Stress response</keyword>
<accession>A4IX27</accession>
<gene>
    <name evidence="1" type="primary">grpE</name>
    <name type="ordered locus">FTW_0570</name>
</gene>
<evidence type="ECO:0000255" key="1">
    <source>
        <dbReference type="HAMAP-Rule" id="MF_01151"/>
    </source>
</evidence>
<name>GRPE_FRATW</name>
<reference key="1">
    <citation type="journal article" date="2007" name="PLoS ONE">
        <title>Complete genomic characterization of a pathogenic A.II strain of Francisella tularensis subspecies tularensis.</title>
        <authorList>
            <person name="Beckstrom-Sternberg S.M."/>
            <person name="Auerbach R.K."/>
            <person name="Godbole S."/>
            <person name="Pearson J.V."/>
            <person name="Beckstrom-Sternberg J.S."/>
            <person name="Deng Z."/>
            <person name="Munk C."/>
            <person name="Kubota K."/>
            <person name="Zhou Y."/>
            <person name="Bruce D."/>
            <person name="Noronha J."/>
            <person name="Scheuermann R.H."/>
            <person name="Wang A."/>
            <person name="Wei X."/>
            <person name="Wang J."/>
            <person name="Hao J."/>
            <person name="Wagner D.M."/>
            <person name="Brettin T.S."/>
            <person name="Brown N."/>
            <person name="Gilna P."/>
            <person name="Keim P.S."/>
        </authorList>
    </citation>
    <scope>NUCLEOTIDE SEQUENCE [LARGE SCALE GENOMIC DNA]</scope>
    <source>
        <strain>WY96-3418</strain>
    </source>
</reference>
<sequence>MSKQEKSNVEDKSLDIETAAQVETAQESASGALEELSVEEQLERAKDTIKELEDSCDQFKDEALRAKAEMENIRKRAERDVSNARKFGIEKFSKELLPVIDSIEQALKHEVKLEEAIAMKEGIELTAKMLVDILKKNGVEELDPKGEKFDPNLHEAMAMIPNPEFEDNTIFDVFQKGYMLNGRIVRAAKVVIVKN</sequence>
<dbReference type="EMBL" id="CP000608">
    <property type="protein sequence ID" value="ABO46479.1"/>
    <property type="molecule type" value="Genomic_DNA"/>
</dbReference>
<dbReference type="RefSeq" id="WP_003021933.1">
    <property type="nucleotide sequence ID" value="NC_009257.1"/>
</dbReference>
<dbReference type="SMR" id="A4IX27"/>
<dbReference type="KEGG" id="ftw:FTW_0570"/>
<dbReference type="HOGENOM" id="CLU_057217_6_0_6"/>
<dbReference type="GO" id="GO:0005829">
    <property type="term" value="C:cytosol"/>
    <property type="evidence" value="ECO:0007669"/>
    <property type="project" value="TreeGrafter"/>
</dbReference>
<dbReference type="GO" id="GO:0000774">
    <property type="term" value="F:adenyl-nucleotide exchange factor activity"/>
    <property type="evidence" value="ECO:0007669"/>
    <property type="project" value="InterPro"/>
</dbReference>
<dbReference type="GO" id="GO:0042803">
    <property type="term" value="F:protein homodimerization activity"/>
    <property type="evidence" value="ECO:0007669"/>
    <property type="project" value="InterPro"/>
</dbReference>
<dbReference type="GO" id="GO:0051087">
    <property type="term" value="F:protein-folding chaperone binding"/>
    <property type="evidence" value="ECO:0007669"/>
    <property type="project" value="InterPro"/>
</dbReference>
<dbReference type="GO" id="GO:0051082">
    <property type="term" value="F:unfolded protein binding"/>
    <property type="evidence" value="ECO:0007669"/>
    <property type="project" value="TreeGrafter"/>
</dbReference>
<dbReference type="GO" id="GO:0006457">
    <property type="term" value="P:protein folding"/>
    <property type="evidence" value="ECO:0007669"/>
    <property type="project" value="InterPro"/>
</dbReference>
<dbReference type="CDD" id="cd00446">
    <property type="entry name" value="GrpE"/>
    <property type="match status" value="1"/>
</dbReference>
<dbReference type="FunFam" id="2.30.22.10:FF:000001">
    <property type="entry name" value="Protein GrpE"/>
    <property type="match status" value="1"/>
</dbReference>
<dbReference type="Gene3D" id="3.90.20.20">
    <property type="match status" value="1"/>
</dbReference>
<dbReference type="Gene3D" id="2.30.22.10">
    <property type="entry name" value="Head domain of nucleotide exchange factor GrpE"/>
    <property type="match status" value="1"/>
</dbReference>
<dbReference type="HAMAP" id="MF_01151">
    <property type="entry name" value="GrpE"/>
    <property type="match status" value="1"/>
</dbReference>
<dbReference type="InterPro" id="IPR000740">
    <property type="entry name" value="GrpE"/>
</dbReference>
<dbReference type="InterPro" id="IPR013805">
    <property type="entry name" value="GrpE_coiled_coil"/>
</dbReference>
<dbReference type="InterPro" id="IPR009012">
    <property type="entry name" value="GrpE_head"/>
</dbReference>
<dbReference type="NCBIfam" id="NF010737">
    <property type="entry name" value="PRK14139.1"/>
    <property type="match status" value="1"/>
</dbReference>
<dbReference type="NCBIfam" id="NF010738">
    <property type="entry name" value="PRK14140.1"/>
    <property type="match status" value="1"/>
</dbReference>
<dbReference type="NCBIfam" id="NF010746">
    <property type="entry name" value="PRK14148.1"/>
    <property type="match status" value="1"/>
</dbReference>
<dbReference type="NCBIfam" id="NF010748">
    <property type="entry name" value="PRK14150.1"/>
    <property type="match status" value="1"/>
</dbReference>
<dbReference type="PANTHER" id="PTHR21237">
    <property type="entry name" value="GRPE PROTEIN"/>
    <property type="match status" value="1"/>
</dbReference>
<dbReference type="PANTHER" id="PTHR21237:SF23">
    <property type="entry name" value="GRPE PROTEIN HOMOLOG, MITOCHONDRIAL"/>
    <property type="match status" value="1"/>
</dbReference>
<dbReference type="Pfam" id="PF01025">
    <property type="entry name" value="GrpE"/>
    <property type="match status" value="1"/>
</dbReference>
<dbReference type="PRINTS" id="PR00773">
    <property type="entry name" value="GRPEPROTEIN"/>
</dbReference>
<dbReference type="SUPFAM" id="SSF58014">
    <property type="entry name" value="Coiled-coil domain of nucleotide exchange factor GrpE"/>
    <property type="match status" value="1"/>
</dbReference>
<dbReference type="SUPFAM" id="SSF51064">
    <property type="entry name" value="Head domain of nucleotide exchange factor GrpE"/>
    <property type="match status" value="1"/>
</dbReference>
<dbReference type="PROSITE" id="PS01071">
    <property type="entry name" value="GRPE"/>
    <property type="match status" value="1"/>
</dbReference>